<reference key="1">
    <citation type="journal article" date="2011" name="J. Bacteriol.">
        <title>Comparative genomics of 28 Salmonella enterica isolates: evidence for CRISPR-mediated adaptive sublineage evolution.</title>
        <authorList>
            <person name="Fricke W.F."/>
            <person name="Mammel M.K."/>
            <person name="McDermott P.F."/>
            <person name="Tartera C."/>
            <person name="White D.G."/>
            <person name="Leclerc J.E."/>
            <person name="Ravel J."/>
            <person name="Cebula T.A."/>
        </authorList>
    </citation>
    <scope>NUCLEOTIDE SEQUENCE [LARGE SCALE GENOMIC DNA]</scope>
    <source>
        <strain>SL476</strain>
    </source>
</reference>
<evidence type="ECO:0000255" key="1">
    <source>
        <dbReference type="HAMAP-Rule" id="MF_00770"/>
    </source>
</evidence>
<dbReference type="EC" id="4.1.2.19" evidence="1"/>
<dbReference type="EMBL" id="CP001120">
    <property type="protein sequence ID" value="ACF69173.1"/>
    <property type="molecule type" value="Genomic_DNA"/>
</dbReference>
<dbReference type="RefSeq" id="WP_001179685.1">
    <property type="nucleotide sequence ID" value="NC_011083.1"/>
</dbReference>
<dbReference type="SMR" id="B4TBY0"/>
<dbReference type="KEGG" id="seh:SeHA_C4374"/>
<dbReference type="HOGENOM" id="CLU_076831_0_0_6"/>
<dbReference type="UniPathway" id="UPA00541">
    <property type="reaction ID" value="UER00603"/>
</dbReference>
<dbReference type="Proteomes" id="UP000001866">
    <property type="component" value="Chromosome"/>
</dbReference>
<dbReference type="GO" id="GO:0005829">
    <property type="term" value="C:cytosol"/>
    <property type="evidence" value="ECO:0007669"/>
    <property type="project" value="TreeGrafter"/>
</dbReference>
<dbReference type="GO" id="GO:0046872">
    <property type="term" value="F:metal ion binding"/>
    <property type="evidence" value="ECO:0007669"/>
    <property type="project" value="UniProtKB-KW"/>
</dbReference>
<dbReference type="GO" id="GO:0008994">
    <property type="term" value="F:rhamnulose-1-phosphate aldolase activity"/>
    <property type="evidence" value="ECO:0007669"/>
    <property type="project" value="UniProtKB-UniRule"/>
</dbReference>
<dbReference type="GO" id="GO:0019323">
    <property type="term" value="P:pentose catabolic process"/>
    <property type="evidence" value="ECO:0007669"/>
    <property type="project" value="TreeGrafter"/>
</dbReference>
<dbReference type="GO" id="GO:0019301">
    <property type="term" value="P:rhamnose catabolic process"/>
    <property type="evidence" value="ECO:0007669"/>
    <property type="project" value="UniProtKB-UniRule"/>
</dbReference>
<dbReference type="CDD" id="cd00398">
    <property type="entry name" value="Aldolase_II"/>
    <property type="match status" value="1"/>
</dbReference>
<dbReference type="FunFam" id="3.40.225.10:FF:000006">
    <property type="entry name" value="Rhamnulose-1-phosphate aldolase"/>
    <property type="match status" value="1"/>
</dbReference>
<dbReference type="Gene3D" id="3.40.225.10">
    <property type="entry name" value="Class II aldolase/adducin N-terminal domain"/>
    <property type="match status" value="1"/>
</dbReference>
<dbReference type="HAMAP" id="MF_00770">
    <property type="entry name" value="RhaD"/>
    <property type="match status" value="1"/>
</dbReference>
<dbReference type="InterPro" id="IPR050197">
    <property type="entry name" value="Aldolase_class_II_sugar_metab"/>
</dbReference>
<dbReference type="InterPro" id="IPR001303">
    <property type="entry name" value="Aldolase_II/adducin_N"/>
</dbReference>
<dbReference type="InterPro" id="IPR036409">
    <property type="entry name" value="Aldolase_II/adducin_N_sf"/>
</dbReference>
<dbReference type="InterPro" id="IPR013447">
    <property type="entry name" value="Rhamnulose-1-P_Aldolase"/>
</dbReference>
<dbReference type="NCBIfam" id="NF002963">
    <property type="entry name" value="PRK03634.1"/>
    <property type="match status" value="1"/>
</dbReference>
<dbReference type="NCBIfam" id="TIGR02624">
    <property type="entry name" value="rhamnu_1P_ald"/>
    <property type="match status" value="1"/>
</dbReference>
<dbReference type="PANTHER" id="PTHR22789">
    <property type="entry name" value="FUCULOSE PHOSPHATE ALDOLASE"/>
    <property type="match status" value="1"/>
</dbReference>
<dbReference type="PANTHER" id="PTHR22789:SF16">
    <property type="entry name" value="RHAMNULOSE-1-PHOSPHATE ALDOLASE"/>
    <property type="match status" value="1"/>
</dbReference>
<dbReference type="Pfam" id="PF00596">
    <property type="entry name" value="Aldolase_II"/>
    <property type="match status" value="1"/>
</dbReference>
<dbReference type="SMART" id="SM01007">
    <property type="entry name" value="Aldolase_II"/>
    <property type="match status" value="1"/>
</dbReference>
<dbReference type="SUPFAM" id="SSF53639">
    <property type="entry name" value="AraD/HMP-PK domain-like"/>
    <property type="match status" value="1"/>
</dbReference>
<organism>
    <name type="scientific">Salmonella heidelberg (strain SL476)</name>
    <dbReference type="NCBI Taxonomy" id="454169"/>
    <lineage>
        <taxon>Bacteria</taxon>
        <taxon>Pseudomonadati</taxon>
        <taxon>Pseudomonadota</taxon>
        <taxon>Gammaproteobacteria</taxon>
        <taxon>Enterobacterales</taxon>
        <taxon>Enterobacteriaceae</taxon>
        <taxon>Salmonella</taxon>
    </lineage>
</organism>
<feature type="chain" id="PRO_1000193735" description="Rhamnulose-1-phosphate aldolase">
    <location>
        <begin position="1"/>
        <end position="275"/>
    </location>
</feature>
<feature type="active site" evidence="1">
    <location>
        <position position="117"/>
    </location>
</feature>
<feature type="binding site" evidence="1">
    <location>
        <position position="141"/>
    </location>
    <ligand>
        <name>Zn(2+)</name>
        <dbReference type="ChEBI" id="CHEBI:29105"/>
    </ligand>
</feature>
<feature type="binding site" evidence="1">
    <location>
        <position position="143"/>
    </location>
    <ligand>
        <name>Zn(2+)</name>
        <dbReference type="ChEBI" id="CHEBI:29105"/>
    </ligand>
</feature>
<feature type="binding site" evidence="1">
    <location>
        <position position="212"/>
    </location>
    <ligand>
        <name>Zn(2+)</name>
        <dbReference type="ChEBI" id="CHEBI:29105"/>
    </ligand>
</feature>
<proteinExistence type="inferred from homology"/>
<name>RHAD_SALHS</name>
<accession>B4TBY0</accession>
<keyword id="KW-0963">Cytoplasm</keyword>
<keyword id="KW-0456">Lyase</keyword>
<keyword id="KW-0479">Metal-binding</keyword>
<keyword id="KW-0684">Rhamnose metabolism</keyword>
<keyword id="KW-0862">Zinc</keyword>
<gene>
    <name evidence="1" type="primary">rhaD</name>
    <name type="ordered locus">SeHA_C4374</name>
</gene>
<comment type="function">
    <text evidence="1">Catalyzes the reversible cleavage of L-rhamnulose-1-phosphate to dihydroxyacetone phosphate (DHAP) and L-lactaldehyde.</text>
</comment>
<comment type="catalytic activity">
    <reaction evidence="1">
        <text>L-rhamnulose 1-phosphate = (S)-lactaldehyde + dihydroxyacetone phosphate</text>
        <dbReference type="Rhea" id="RHEA:19689"/>
        <dbReference type="ChEBI" id="CHEBI:18041"/>
        <dbReference type="ChEBI" id="CHEBI:57642"/>
        <dbReference type="ChEBI" id="CHEBI:58313"/>
        <dbReference type="EC" id="4.1.2.19"/>
    </reaction>
</comment>
<comment type="cofactor">
    <cofactor evidence="1">
        <name>Zn(2+)</name>
        <dbReference type="ChEBI" id="CHEBI:29105"/>
    </cofactor>
    <text evidence="1">Binds 1 zinc ion per subunit.</text>
</comment>
<comment type="pathway">
    <text evidence="1">Carbohydrate degradation; L-rhamnose degradation; glycerone phosphate from L-rhamnose: step 3/3.</text>
</comment>
<comment type="subunit">
    <text evidence="1">Homotetramer.</text>
</comment>
<comment type="subcellular location">
    <subcellularLocation>
        <location evidence="1">Cytoplasm</location>
    </subcellularLocation>
</comment>
<comment type="similarity">
    <text evidence="1">Belongs to the aldolase class II family. RhaD subfamily.</text>
</comment>
<sequence length="275" mass="30157">MQNITDSWFVQGMIKATSDAWLKGWDERNGGNLTLRLDEADIAPFAANFHEKPRYIALSQPMPLLANTPFIVTGSGKFFRNVQLDPAANLGVVKIDSDGAGYHILWGLTHDAVPTSELPAHFLSHCERIKATHGKDRVIMHCHATNLIALTYVLENNTALITRKLWEGSTECLVVFPDGVGILPWMVPGTDEIGQATAQEMQKHSLVLWPFHGVFGSGPTLDETFGLIDTAEKSAEVLVKIYSMGGMKQTITREELVALGKRFGVTPLASAVALY</sequence>
<protein>
    <recommendedName>
        <fullName evidence="1">Rhamnulose-1-phosphate aldolase</fullName>
        <ecNumber evidence="1">4.1.2.19</ecNumber>
    </recommendedName>
</protein>